<reference key="1">
    <citation type="journal article" date="2001" name="Nature">
        <title>Complete genome sequence of Salmonella enterica serovar Typhimurium LT2.</title>
        <authorList>
            <person name="McClelland M."/>
            <person name="Sanderson K.E."/>
            <person name="Spieth J."/>
            <person name="Clifton S.W."/>
            <person name="Latreille P."/>
            <person name="Courtney L."/>
            <person name="Porwollik S."/>
            <person name="Ali J."/>
            <person name="Dante M."/>
            <person name="Du F."/>
            <person name="Hou S."/>
            <person name="Layman D."/>
            <person name="Leonard S."/>
            <person name="Nguyen C."/>
            <person name="Scott K."/>
            <person name="Holmes A."/>
            <person name="Grewal N."/>
            <person name="Mulvaney E."/>
            <person name="Ryan E."/>
            <person name="Sun H."/>
            <person name="Florea L."/>
            <person name="Miller W."/>
            <person name="Stoneking T."/>
            <person name="Nhan M."/>
            <person name="Waterston R."/>
            <person name="Wilson R.K."/>
        </authorList>
    </citation>
    <scope>NUCLEOTIDE SEQUENCE [LARGE SCALE GENOMIC DNA]</scope>
    <source>
        <strain>LT2 / SGSC1412 / ATCC 700720</strain>
    </source>
</reference>
<reference key="2">
    <citation type="journal article" date="1985" name="Eur. J. Biochem.">
        <title>Cloning and characterization of the pyrE gene and of PyrE::Mud1 (Ap lac) fusions from Salmonella typhimurium.</title>
        <authorList>
            <person name="Neuhard J."/>
            <person name="Stauning E."/>
            <person name="Kelln R.A."/>
        </authorList>
    </citation>
    <scope>NUCLEOTIDE SEQUENCE [GENOMIC DNA] OF 131-238</scope>
</reference>
<keyword id="KW-0548">Nucleotidyltransferase</keyword>
<keyword id="KW-1185">Reference proteome</keyword>
<keyword id="KW-0694">RNA-binding</keyword>
<keyword id="KW-0698">rRNA processing</keyword>
<keyword id="KW-0808">Transferase</keyword>
<keyword id="KW-0819">tRNA processing</keyword>
<keyword id="KW-0820">tRNA-binding</keyword>
<comment type="function">
    <text>Phosphorolytic exoribonuclease that removes nucleotide residues following the -CCA terminus of tRNA and adds nucleotides to the ends of RNA molecules by using nucleoside diphosphates as substrates.</text>
</comment>
<comment type="function">
    <text evidence="1">Phosphorolytic 3'-5' exoribonuclease that plays an important role in tRNA 3'-end maturation. Removes nucleotide residues following the 3'-CCA terminus of tRNAs; can also add nucleotides to the ends of RNA molecules by using nucleoside diphosphates as substrates, but this may not be physiologically important. Probably plays a role in initiation of 16S rRNA degradation (leading to ribosome degradation) during starvation.</text>
</comment>
<comment type="catalytic activity">
    <reaction evidence="1">
        <text>tRNA(n+1) + phosphate = tRNA(n) + a ribonucleoside 5'-diphosphate</text>
        <dbReference type="Rhea" id="RHEA:10628"/>
        <dbReference type="Rhea" id="RHEA-COMP:17343"/>
        <dbReference type="Rhea" id="RHEA-COMP:17344"/>
        <dbReference type="ChEBI" id="CHEBI:43474"/>
        <dbReference type="ChEBI" id="CHEBI:57930"/>
        <dbReference type="ChEBI" id="CHEBI:173114"/>
        <dbReference type="EC" id="2.7.7.56"/>
    </reaction>
</comment>
<comment type="subunit">
    <text evidence="1">Homohexameric ring arranged as a trimer of dimers.</text>
</comment>
<comment type="similarity">
    <text evidence="1">Belongs to the RNase PH family.</text>
</comment>
<name>RNPH_SALTY</name>
<proteinExistence type="inferred from homology"/>
<accession>P0A2C3</accession>
<accession>P26155</accession>
<protein>
    <recommendedName>
        <fullName evidence="1">Ribonuclease PH</fullName>
        <shortName evidence="1">RNase PH</shortName>
        <ecNumber evidence="1">2.7.7.56</ecNumber>
    </recommendedName>
    <alternativeName>
        <fullName evidence="1">tRNA nucleotidyltransferase</fullName>
    </alternativeName>
</protein>
<evidence type="ECO:0000255" key="1">
    <source>
        <dbReference type="HAMAP-Rule" id="MF_00564"/>
    </source>
</evidence>
<evidence type="ECO:0000305" key="2"/>
<organism>
    <name type="scientific">Salmonella typhimurium (strain LT2 / SGSC1412 / ATCC 700720)</name>
    <dbReference type="NCBI Taxonomy" id="99287"/>
    <lineage>
        <taxon>Bacteria</taxon>
        <taxon>Pseudomonadati</taxon>
        <taxon>Pseudomonadota</taxon>
        <taxon>Gammaproteobacteria</taxon>
        <taxon>Enterobacterales</taxon>
        <taxon>Enterobacteriaceae</taxon>
        <taxon>Salmonella</taxon>
    </lineage>
</organism>
<dbReference type="EC" id="2.7.7.56" evidence="1"/>
<dbReference type="EMBL" id="AE006468">
    <property type="protein sequence ID" value="AAL22593.1"/>
    <property type="molecule type" value="Genomic_DNA"/>
</dbReference>
<dbReference type="PIR" id="A21911">
    <property type="entry name" value="A21911"/>
</dbReference>
<dbReference type="RefSeq" id="NP_462634.1">
    <property type="nucleotide sequence ID" value="NC_003197.2"/>
</dbReference>
<dbReference type="RefSeq" id="WP_001247078.1">
    <property type="nucleotide sequence ID" value="NC_003197.2"/>
</dbReference>
<dbReference type="SMR" id="P0A2C3"/>
<dbReference type="STRING" id="99287.STM3734"/>
<dbReference type="PaxDb" id="99287-STM3734"/>
<dbReference type="GeneID" id="1255258"/>
<dbReference type="KEGG" id="stm:STM3734"/>
<dbReference type="PATRIC" id="fig|99287.12.peg.3950"/>
<dbReference type="HOGENOM" id="CLU_050858_0_0_6"/>
<dbReference type="OMA" id="RYNMAPF"/>
<dbReference type="PhylomeDB" id="P0A2C3"/>
<dbReference type="BioCyc" id="SENT99287:STM3734-MONOMER"/>
<dbReference type="Proteomes" id="UP000001014">
    <property type="component" value="Chromosome"/>
</dbReference>
<dbReference type="GO" id="GO:0000175">
    <property type="term" value="F:3'-5'-RNA exonuclease activity"/>
    <property type="evidence" value="ECO:0007669"/>
    <property type="project" value="UniProtKB-UniRule"/>
</dbReference>
<dbReference type="GO" id="GO:0003723">
    <property type="term" value="F:RNA binding"/>
    <property type="evidence" value="ECO:0000318"/>
    <property type="project" value="GO_Central"/>
</dbReference>
<dbReference type="GO" id="GO:0000049">
    <property type="term" value="F:tRNA binding"/>
    <property type="evidence" value="ECO:0007669"/>
    <property type="project" value="UniProtKB-UniRule"/>
</dbReference>
<dbReference type="GO" id="GO:0009022">
    <property type="term" value="F:tRNA nucleotidyltransferase activity"/>
    <property type="evidence" value="ECO:0007669"/>
    <property type="project" value="UniProtKB-UniRule"/>
</dbReference>
<dbReference type="GO" id="GO:0016075">
    <property type="term" value="P:rRNA catabolic process"/>
    <property type="evidence" value="ECO:0000318"/>
    <property type="project" value="GO_Central"/>
</dbReference>
<dbReference type="GO" id="GO:0006364">
    <property type="term" value="P:rRNA processing"/>
    <property type="evidence" value="ECO:0007669"/>
    <property type="project" value="UniProtKB-KW"/>
</dbReference>
<dbReference type="GO" id="GO:0008033">
    <property type="term" value="P:tRNA processing"/>
    <property type="evidence" value="ECO:0007669"/>
    <property type="project" value="UniProtKB-UniRule"/>
</dbReference>
<dbReference type="CDD" id="cd11362">
    <property type="entry name" value="RNase_PH_bact"/>
    <property type="match status" value="1"/>
</dbReference>
<dbReference type="FunFam" id="3.30.230.70:FF:000003">
    <property type="entry name" value="Ribonuclease PH"/>
    <property type="match status" value="1"/>
</dbReference>
<dbReference type="Gene3D" id="3.30.230.70">
    <property type="entry name" value="GHMP Kinase, N-terminal domain"/>
    <property type="match status" value="1"/>
</dbReference>
<dbReference type="HAMAP" id="MF_00564">
    <property type="entry name" value="RNase_PH"/>
    <property type="match status" value="1"/>
</dbReference>
<dbReference type="InterPro" id="IPR001247">
    <property type="entry name" value="ExoRNase_PH_dom1"/>
</dbReference>
<dbReference type="InterPro" id="IPR015847">
    <property type="entry name" value="ExoRNase_PH_dom2"/>
</dbReference>
<dbReference type="InterPro" id="IPR036345">
    <property type="entry name" value="ExoRNase_PH_dom2_sf"/>
</dbReference>
<dbReference type="InterPro" id="IPR027408">
    <property type="entry name" value="PNPase/RNase_PH_dom_sf"/>
</dbReference>
<dbReference type="InterPro" id="IPR020568">
    <property type="entry name" value="Ribosomal_Su5_D2-typ_SF"/>
</dbReference>
<dbReference type="InterPro" id="IPR050080">
    <property type="entry name" value="RNase_PH"/>
</dbReference>
<dbReference type="InterPro" id="IPR002381">
    <property type="entry name" value="RNase_PH_bac-type"/>
</dbReference>
<dbReference type="InterPro" id="IPR018336">
    <property type="entry name" value="RNase_PH_CS"/>
</dbReference>
<dbReference type="NCBIfam" id="TIGR01966">
    <property type="entry name" value="RNasePH"/>
    <property type="match status" value="1"/>
</dbReference>
<dbReference type="PANTHER" id="PTHR11953">
    <property type="entry name" value="EXOSOME COMPLEX COMPONENT"/>
    <property type="match status" value="1"/>
</dbReference>
<dbReference type="PANTHER" id="PTHR11953:SF0">
    <property type="entry name" value="EXOSOME COMPLEX COMPONENT RRP41"/>
    <property type="match status" value="1"/>
</dbReference>
<dbReference type="Pfam" id="PF01138">
    <property type="entry name" value="RNase_PH"/>
    <property type="match status" value="1"/>
</dbReference>
<dbReference type="Pfam" id="PF03725">
    <property type="entry name" value="RNase_PH_C"/>
    <property type="match status" value="1"/>
</dbReference>
<dbReference type="SUPFAM" id="SSF55666">
    <property type="entry name" value="Ribonuclease PH domain 2-like"/>
    <property type="match status" value="1"/>
</dbReference>
<dbReference type="SUPFAM" id="SSF54211">
    <property type="entry name" value="Ribosomal protein S5 domain 2-like"/>
    <property type="match status" value="1"/>
</dbReference>
<dbReference type="PROSITE" id="PS01277">
    <property type="entry name" value="RIBONUCLEASE_PH"/>
    <property type="match status" value="1"/>
</dbReference>
<feature type="chain" id="PRO_0000139935" description="Ribonuclease PH">
    <location>
        <begin position="1"/>
        <end position="238"/>
    </location>
</feature>
<feature type="binding site" evidence="1">
    <location>
        <position position="86"/>
    </location>
    <ligand>
        <name>phosphate</name>
        <dbReference type="ChEBI" id="CHEBI:43474"/>
        <note>substrate</note>
    </ligand>
</feature>
<feature type="binding site" evidence="1">
    <location>
        <begin position="124"/>
        <end position="126"/>
    </location>
    <ligand>
        <name>phosphate</name>
        <dbReference type="ChEBI" id="CHEBI:43474"/>
        <note>substrate</note>
    </ligand>
</feature>
<feature type="sequence conflict" description="In Ref. 2." evidence="2" ref="2">
    <original>CDL</original>
    <variation>RDP</variation>
    <location>
        <begin position="173"/>
        <end position="175"/>
    </location>
</feature>
<sequence length="238" mass="25269">MRPAGRSANQVRPVTLTRNYTKHAEGSVLVEFGDTKVLCTASIEEGVPRFLKGQGQGWITAEYGMLPRATHTRNAREAAKGKQGGRTMEIQRLIARALRAAVDLKTLGEFTITLDCDVIQADGGTRTASITGACVALADALNKLVANGKLKTNPMKGMVAAVSVGIVNGEAICDLEYVEDSAAETDMNVVMTEDGRIIEVQGTAEGEPFSHEELLTLLALARGGIESIVATQKAALEN</sequence>
<gene>
    <name evidence="1" type="primary">rph</name>
    <name type="ordered locus">STM3734</name>
</gene>